<accession>Q1C1M9</accession>
<proteinExistence type="inferred from homology"/>
<dbReference type="EC" id="3.6.1.9" evidence="1"/>
<dbReference type="EMBL" id="CP000308">
    <property type="protein sequence ID" value="ABG15643.1"/>
    <property type="status" value="ALT_INIT"/>
    <property type="molecule type" value="Genomic_DNA"/>
</dbReference>
<dbReference type="RefSeq" id="WP_002210078.1">
    <property type="nucleotide sequence ID" value="NZ_CP009906.1"/>
</dbReference>
<dbReference type="SMR" id="Q1C1M9"/>
<dbReference type="KEGG" id="ypa:YPA_3681"/>
<dbReference type="Proteomes" id="UP000001971">
    <property type="component" value="Chromosome"/>
</dbReference>
<dbReference type="GO" id="GO:0005737">
    <property type="term" value="C:cytoplasm"/>
    <property type="evidence" value="ECO:0007669"/>
    <property type="project" value="UniProtKB-SubCell"/>
</dbReference>
<dbReference type="GO" id="GO:0036218">
    <property type="term" value="F:dTTP diphosphatase activity"/>
    <property type="evidence" value="ECO:0007669"/>
    <property type="project" value="RHEA"/>
</dbReference>
<dbReference type="GO" id="GO:0036221">
    <property type="term" value="F:UTP diphosphatase activity"/>
    <property type="evidence" value="ECO:0007669"/>
    <property type="project" value="RHEA"/>
</dbReference>
<dbReference type="GO" id="GO:0009117">
    <property type="term" value="P:nucleotide metabolic process"/>
    <property type="evidence" value="ECO:0007669"/>
    <property type="project" value="UniProtKB-KW"/>
</dbReference>
<dbReference type="CDD" id="cd00555">
    <property type="entry name" value="Maf"/>
    <property type="match status" value="1"/>
</dbReference>
<dbReference type="FunFam" id="3.90.950.10:FF:000004">
    <property type="entry name" value="dTTP/UTP pyrophosphatase"/>
    <property type="match status" value="1"/>
</dbReference>
<dbReference type="Gene3D" id="3.90.950.10">
    <property type="match status" value="1"/>
</dbReference>
<dbReference type="HAMAP" id="MF_00528">
    <property type="entry name" value="Maf"/>
    <property type="match status" value="1"/>
</dbReference>
<dbReference type="InterPro" id="IPR029001">
    <property type="entry name" value="ITPase-like_fam"/>
</dbReference>
<dbReference type="InterPro" id="IPR003697">
    <property type="entry name" value="Maf-like"/>
</dbReference>
<dbReference type="NCBIfam" id="TIGR00172">
    <property type="entry name" value="maf"/>
    <property type="match status" value="1"/>
</dbReference>
<dbReference type="PANTHER" id="PTHR43213">
    <property type="entry name" value="BIFUNCTIONAL DTTP/UTP PYROPHOSPHATASE/METHYLTRANSFERASE PROTEIN-RELATED"/>
    <property type="match status" value="1"/>
</dbReference>
<dbReference type="PANTHER" id="PTHR43213:SF5">
    <property type="entry name" value="BIFUNCTIONAL DTTP_UTP PYROPHOSPHATASE_METHYLTRANSFERASE PROTEIN-RELATED"/>
    <property type="match status" value="1"/>
</dbReference>
<dbReference type="Pfam" id="PF02545">
    <property type="entry name" value="Maf"/>
    <property type="match status" value="1"/>
</dbReference>
<dbReference type="PIRSF" id="PIRSF006305">
    <property type="entry name" value="Maf"/>
    <property type="match status" value="1"/>
</dbReference>
<dbReference type="SUPFAM" id="SSF52972">
    <property type="entry name" value="ITPase-like"/>
    <property type="match status" value="1"/>
</dbReference>
<sequence length="197" mass="21357">MTALYLASASPRRRELLALLDLPFEVLKTEVEEQRHPGESAQVYVQRLAQDKARAGVAVAPQDLPVLGADTIVVLNGQVLEKPRDKEHAQQILSALSGQKHQVMTAVALADRQNMLSAMVVTDVTFRVLSPLEISDYIATGEPMDKAGAYGIQGKGGCFVRAIAGSYHAVVGLPLVETHELLSHFIAQRNVRGIHDS</sequence>
<comment type="function">
    <text evidence="1">Nucleoside triphosphate pyrophosphatase that hydrolyzes dTTP and UTP. May have a dual role in cell division arrest and in preventing the incorporation of modified nucleotides into cellular nucleic acids.</text>
</comment>
<comment type="catalytic activity">
    <reaction evidence="1">
        <text>dTTP + H2O = dTMP + diphosphate + H(+)</text>
        <dbReference type="Rhea" id="RHEA:28534"/>
        <dbReference type="ChEBI" id="CHEBI:15377"/>
        <dbReference type="ChEBI" id="CHEBI:15378"/>
        <dbReference type="ChEBI" id="CHEBI:33019"/>
        <dbReference type="ChEBI" id="CHEBI:37568"/>
        <dbReference type="ChEBI" id="CHEBI:63528"/>
        <dbReference type="EC" id="3.6.1.9"/>
    </reaction>
</comment>
<comment type="catalytic activity">
    <reaction evidence="1">
        <text>UTP + H2O = UMP + diphosphate + H(+)</text>
        <dbReference type="Rhea" id="RHEA:29395"/>
        <dbReference type="ChEBI" id="CHEBI:15377"/>
        <dbReference type="ChEBI" id="CHEBI:15378"/>
        <dbReference type="ChEBI" id="CHEBI:33019"/>
        <dbReference type="ChEBI" id="CHEBI:46398"/>
        <dbReference type="ChEBI" id="CHEBI:57865"/>
        <dbReference type="EC" id="3.6.1.9"/>
    </reaction>
</comment>
<comment type="cofactor">
    <cofactor evidence="1">
        <name>a divalent metal cation</name>
        <dbReference type="ChEBI" id="CHEBI:60240"/>
    </cofactor>
</comment>
<comment type="subcellular location">
    <subcellularLocation>
        <location evidence="1">Cytoplasm</location>
    </subcellularLocation>
</comment>
<comment type="similarity">
    <text evidence="1">Belongs to the Maf family. YhdE subfamily.</text>
</comment>
<comment type="sequence caution" evidence="2">
    <conflict type="erroneous initiation">
        <sequence resource="EMBL-CDS" id="ABG15643"/>
    </conflict>
</comment>
<protein>
    <recommendedName>
        <fullName evidence="1">dTTP/UTP pyrophosphatase</fullName>
        <shortName evidence="1">dTTPase/UTPase</shortName>
        <ecNumber evidence="1">3.6.1.9</ecNumber>
    </recommendedName>
    <alternativeName>
        <fullName evidence="1">Nucleoside triphosphate pyrophosphatase</fullName>
    </alternativeName>
    <alternativeName>
        <fullName evidence="1">Nucleotide pyrophosphatase</fullName>
        <shortName evidence="1">Nucleotide PPase</shortName>
    </alternativeName>
</protein>
<gene>
    <name type="ordered locus">YPA_3681</name>
</gene>
<feature type="chain" id="PRO_0000267473" description="dTTP/UTP pyrophosphatase">
    <location>
        <begin position="1"/>
        <end position="197"/>
    </location>
</feature>
<feature type="active site" description="Proton acceptor" evidence="1">
    <location>
        <position position="70"/>
    </location>
</feature>
<feature type="site" description="Important for substrate specificity" evidence="1">
    <location>
        <position position="12"/>
    </location>
</feature>
<feature type="site" description="Important for substrate specificity" evidence="1">
    <location>
        <position position="71"/>
    </location>
</feature>
<feature type="site" description="Important for substrate specificity" evidence="1">
    <location>
        <position position="153"/>
    </location>
</feature>
<name>NTPPA_YERPA</name>
<keyword id="KW-0963">Cytoplasm</keyword>
<keyword id="KW-0378">Hydrolase</keyword>
<keyword id="KW-0546">Nucleotide metabolism</keyword>
<evidence type="ECO:0000255" key="1">
    <source>
        <dbReference type="HAMAP-Rule" id="MF_00528"/>
    </source>
</evidence>
<evidence type="ECO:0000305" key="2"/>
<organism>
    <name type="scientific">Yersinia pestis bv. Antiqua (strain Antiqua)</name>
    <dbReference type="NCBI Taxonomy" id="360102"/>
    <lineage>
        <taxon>Bacteria</taxon>
        <taxon>Pseudomonadati</taxon>
        <taxon>Pseudomonadota</taxon>
        <taxon>Gammaproteobacteria</taxon>
        <taxon>Enterobacterales</taxon>
        <taxon>Yersiniaceae</taxon>
        <taxon>Yersinia</taxon>
    </lineage>
</organism>
<reference key="1">
    <citation type="journal article" date="2006" name="J. Bacteriol.">
        <title>Complete genome sequence of Yersinia pestis strains Antiqua and Nepal516: evidence of gene reduction in an emerging pathogen.</title>
        <authorList>
            <person name="Chain P.S.G."/>
            <person name="Hu P."/>
            <person name="Malfatti S.A."/>
            <person name="Radnedge L."/>
            <person name="Larimer F."/>
            <person name="Vergez L.M."/>
            <person name="Worsham P."/>
            <person name="Chu M.C."/>
            <person name="Andersen G.L."/>
        </authorList>
    </citation>
    <scope>NUCLEOTIDE SEQUENCE [LARGE SCALE GENOMIC DNA]</scope>
    <source>
        <strain>Antiqua</strain>
    </source>
</reference>